<organism>
    <name type="scientific">Rhizobium meliloti (strain 1021)</name>
    <name type="common">Ensifer meliloti</name>
    <name type="synonym">Sinorhizobium meliloti</name>
    <dbReference type="NCBI Taxonomy" id="266834"/>
    <lineage>
        <taxon>Bacteria</taxon>
        <taxon>Pseudomonadati</taxon>
        <taxon>Pseudomonadota</taxon>
        <taxon>Alphaproteobacteria</taxon>
        <taxon>Hyphomicrobiales</taxon>
        <taxon>Rhizobiaceae</taxon>
        <taxon>Sinorhizobium/Ensifer group</taxon>
        <taxon>Sinorhizobium</taxon>
    </lineage>
</organism>
<gene>
    <name evidence="1" type="primary">purH</name>
    <name type="ordered locus">R03322</name>
    <name type="ORF">SMc04088</name>
</gene>
<proteinExistence type="inferred from homology"/>
<accession>Q92KX6</accession>
<name>PUR9_RHIME</name>
<protein>
    <recommendedName>
        <fullName evidence="1">Bifunctional purine biosynthesis protein PurH</fullName>
    </recommendedName>
    <domain>
        <recommendedName>
            <fullName evidence="1">Phosphoribosylaminoimidazolecarboxamide formyltransferase</fullName>
            <ecNumber evidence="1">2.1.2.3</ecNumber>
        </recommendedName>
        <alternativeName>
            <fullName evidence="1">AICAR transformylase</fullName>
        </alternativeName>
    </domain>
    <domain>
        <recommendedName>
            <fullName evidence="1">IMP cyclohydrolase</fullName>
            <ecNumber evidence="1">3.5.4.10</ecNumber>
        </recommendedName>
        <alternativeName>
            <fullName evidence="1">ATIC</fullName>
        </alternativeName>
        <alternativeName>
            <fullName evidence="1">IMP synthase</fullName>
        </alternativeName>
        <alternativeName>
            <fullName evidence="1">Inosinicase</fullName>
        </alternativeName>
    </domain>
</protein>
<sequence>MAVASKKIPAPDEVRIKTALLSVSDKTGIVELARALNDKGIRLISTGGTHKALADAGLPVSDVSELTGFPEIMDGRVKTLHPGVHGGLLAIRDDAEHADAMSAHGITAIDLAVINLYPFEEVRAKGGDYPTTVENIDIGGPAMIRASAKNHAYVTIVTDPADYSPLLEEIADGATRYAFRQKMAAKAYARTAAYDATISNWFAEVLDTPMPRHRVLGGLLREEMRYGENPHQKAGFYVTGEKRPGVATAALLQGKQLSYNNINDTDAAFELVAEFLPEKAPACAIIKHANPCGVATAPSLAEAYRRALACDSTSAFGGIIALNQELDAETAEEIVKLFTEVIIAPSVSDDAKAVIARKPNLRLLAAGGLPDPRTPGLTAKTVAGGVLVQTRDNGMVEDLELKVVTKRAPTAQELEDMKFAFKVAKHVKSNAIVYAKDGQTAGIGAGQMSRVDSARIAAIKAEEAAKAMGLAEPLTRGSAVASEAFLPFADGLLSAIAAGATAVIQPGGSMRDEEVIAAANEHDVAMVFTGMRHFRH</sequence>
<keyword id="KW-0378">Hydrolase</keyword>
<keyword id="KW-0511">Multifunctional enzyme</keyword>
<keyword id="KW-0658">Purine biosynthesis</keyword>
<keyword id="KW-1185">Reference proteome</keyword>
<keyword id="KW-0808">Transferase</keyword>
<evidence type="ECO:0000255" key="1">
    <source>
        <dbReference type="HAMAP-Rule" id="MF_00139"/>
    </source>
</evidence>
<evidence type="ECO:0000255" key="2">
    <source>
        <dbReference type="PROSITE-ProRule" id="PRU01202"/>
    </source>
</evidence>
<comment type="catalytic activity">
    <reaction evidence="1">
        <text>(6R)-10-formyltetrahydrofolate + 5-amino-1-(5-phospho-beta-D-ribosyl)imidazole-4-carboxamide = 5-formamido-1-(5-phospho-D-ribosyl)imidazole-4-carboxamide + (6S)-5,6,7,8-tetrahydrofolate</text>
        <dbReference type="Rhea" id="RHEA:22192"/>
        <dbReference type="ChEBI" id="CHEBI:57453"/>
        <dbReference type="ChEBI" id="CHEBI:58467"/>
        <dbReference type="ChEBI" id="CHEBI:58475"/>
        <dbReference type="ChEBI" id="CHEBI:195366"/>
        <dbReference type="EC" id="2.1.2.3"/>
    </reaction>
</comment>
<comment type="catalytic activity">
    <reaction evidence="1">
        <text>IMP + H2O = 5-formamido-1-(5-phospho-D-ribosyl)imidazole-4-carboxamide</text>
        <dbReference type="Rhea" id="RHEA:18445"/>
        <dbReference type="ChEBI" id="CHEBI:15377"/>
        <dbReference type="ChEBI" id="CHEBI:58053"/>
        <dbReference type="ChEBI" id="CHEBI:58467"/>
        <dbReference type="EC" id="3.5.4.10"/>
    </reaction>
</comment>
<comment type="pathway">
    <text evidence="1">Purine metabolism; IMP biosynthesis via de novo pathway; 5-formamido-1-(5-phospho-D-ribosyl)imidazole-4-carboxamide from 5-amino-1-(5-phospho-D-ribosyl)imidazole-4-carboxamide (10-formyl THF route): step 1/1.</text>
</comment>
<comment type="pathway">
    <text evidence="1">Purine metabolism; IMP biosynthesis via de novo pathway; IMP from 5-formamido-1-(5-phospho-D-ribosyl)imidazole-4-carboxamide: step 1/1.</text>
</comment>
<comment type="domain">
    <text evidence="1">The IMP cyclohydrolase activity resides in the N-terminal region.</text>
</comment>
<comment type="similarity">
    <text evidence="1">Belongs to the PurH family.</text>
</comment>
<feature type="chain" id="PRO_0000192117" description="Bifunctional purine biosynthesis protein PurH">
    <location>
        <begin position="1"/>
        <end position="536"/>
    </location>
</feature>
<feature type="domain" description="MGS-like" evidence="2">
    <location>
        <begin position="8"/>
        <end position="158"/>
    </location>
</feature>
<dbReference type="EC" id="2.1.2.3" evidence="1"/>
<dbReference type="EC" id="3.5.4.10" evidence="1"/>
<dbReference type="EMBL" id="AL591688">
    <property type="protein sequence ID" value="CAC47901.1"/>
    <property type="molecule type" value="Genomic_DNA"/>
</dbReference>
<dbReference type="RefSeq" id="NP_387428.1">
    <property type="nucleotide sequence ID" value="NC_003047.1"/>
</dbReference>
<dbReference type="RefSeq" id="WP_010970573.1">
    <property type="nucleotide sequence ID" value="NC_003047.1"/>
</dbReference>
<dbReference type="SMR" id="Q92KX6"/>
<dbReference type="EnsemblBacteria" id="CAC47901">
    <property type="protein sequence ID" value="CAC47901"/>
    <property type="gene ID" value="SMc04088"/>
</dbReference>
<dbReference type="KEGG" id="sme:SMc04088"/>
<dbReference type="PATRIC" id="fig|266834.11.peg.4883"/>
<dbReference type="eggNOG" id="COG0138">
    <property type="taxonomic scope" value="Bacteria"/>
</dbReference>
<dbReference type="HOGENOM" id="CLU_016316_5_2_5"/>
<dbReference type="OrthoDB" id="9802065at2"/>
<dbReference type="UniPathway" id="UPA00074">
    <property type="reaction ID" value="UER00133"/>
</dbReference>
<dbReference type="UniPathway" id="UPA00074">
    <property type="reaction ID" value="UER00135"/>
</dbReference>
<dbReference type="Proteomes" id="UP000001976">
    <property type="component" value="Chromosome"/>
</dbReference>
<dbReference type="GO" id="GO:0005829">
    <property type="term" value="C:cytosol"/>
    <property type="evidence" value="ECO:0007669"/>
    <property type="project" value="TreeGrafter"/>
</dbReference>
<dbReference type="GO" id="GO:0003937">
    <property type="term" value="F:IMP cyclohydrolase activity"/>
    <property type="evidence" value="ECO:0007669"/>
    <property type="project" value="UniProtKB-UniRule"/>
</dbReference>
<dbReference type="GO" id="GO:0004643">
    <property type="term" value="F:phosphoribosylaminoimidazolecarboxamide formyltransferase activity"/>
    <property type="evidence" value="ECO:0007669"/>
    <property type="project" value="UniProtKB-UniRule"/>
</dbReference>
<dbReference type="GO" id="GO:0006189">
    <property type="term" value="P:'de novo' IMP biosynthetic process"/>
    <property type="evidence" value="ECO:0007669"/>
    <property type="project" value="UniProtKB-UniRule"/>
</dbReference>
<dbReference type="CDD" id="cd01421">
    <property type="entry name" value="IMPCH"/>
    <property type="match status" value="1"/>
</dbReference>
<dbReference type="FunFam" id="3.40.140.20:FF:000001">
    <property type="entry name" value="Bifunctional purine biosynthesis protein PurH"/>
    <property type="match status" value="1"/>
</dbReference>
<dbReference type="FunFam" id="3.40.140.20:FF:000002">
    <property type="entry name" value="Bifunctional purine biosynthesis protein PurH"/>
    <property type="match status" value="1"/>
</dbReference>
<dbReference type="FunFam" id="3.40.50.1380:FF:000001">
    <property type="entry name" value="Bifunctional purine biosynthesis protein PurH"/>
    <property type="match status" value="1"/>
</dbReference>
<dbReference type="Gene3D" id="3.40.140.20">
    <property type="match status" value="2"/>
</dbReference>
<dbReference type="Gene3D" id="3.40.50.1380">
    <property type="entry name" value="Methylglyoxal synthase-like domain"/>
    <property type="match status" value="1"/>
</dbReference>
<dbReference type="HAMAP" id="MF_00139">
    <property type="entry name" value="PurH"/>
    <property type="match status" value="1"/>
</dbReference>
<dbReference type="InterPro" id="IPR024051">
    <property type="entry name" value="AICAR_Tfase_dup_dom_sf"/>
</dbReference>
<dbReference type="InterPro" id="IPR016193">
    <property type="entry name" value="Cytidine_deaminase-like"/>
</dbReference>
<dbReference type="InterPro" id="IPR011607">
    <property type="entry name" value="MGS-like_dom"/>
</dbReference>
<dbReference type="InterPro" id="IPR036914">
    <property type="entry name" value="MGS-like_dom_sf"/>
</dbReference>
<dbReference type="InterPro" id="IPR002695">
    <property type="entry name" value="PurH-like"/>
</dbReference>
<dbReference type="NCBIfam" id="NF002049">
    <property type="entry name" value="PRK00881.1"/>
    <property type="match status" value="1"/>
</dbReference>
<dbReference type="NCBIfam" id="TIGR00355">
    <property type="entry name" value="purH"/>
    <property type="match status" value="1"/>
</dbReference>
<dbReference type="PANTHER" id="PTHR11692:SF0">
    <property type="entry name" value="BIFUNCTIONAL PURINE BIOSYNTHESIS PROTEIN ATIC"/>
    <property type="match status" value="1"/>
</dbReference>
<dbReference type="PANTHER" id="PTHR11692">
    <property type="entry name" value="BIFUNCTIONAL PURINE BIOSYNTHESIS PROTEIN PURH"/>
    <property type="match status" value="1"/>
</dbReference>
<dbReference type="Pfam" id="PF01808">
    <property type="entry name" value="AICARFT_IMPCHas"/>
    <property type="match status" value="1"/>
</dbReference>
<dbReference type="Pfam" id="PF02142">
    <property type="entry name" value="MGS"/>
    <property type="match status" value="1"/>
</dbReference>
<dbReference type="PIRSF" id="PIRSF000414">
    <property type="entry name" value="AICARFT_IMPCHas"/>
    <property type="match status" value="1"/>
</dbReference>
<dbReference type="SMART" id="SM00798">
    <property type="entry name" value="AICARFT_IMPCHas"/>
    <property type="match status" value="1"/>
</dbReference>
<dbReference type="SMART" id="SM00851">
    <property type="entry name" value="MGS"/>
    <property type="match status" value="1"/>
</dbReference>
<dbReference type="SUPFAM" id="SSF53927">
    <property type="entry name" value="Cytidine deaminase-like"/>
    <property type="match status" value="1"/>
</dbReference>
<dbReference type="SUPFAM" id="SSF52335">
    <property type="entry name" value="Methylglyoxal synthase-like"/>
    <property type="match status" value="1"/>
</dbReference>
<dbReference type="PROSITE" id="PS51855">
    <property type="entry name" value="MGS"/>
    <property type="match status" value="1"/>
</dbReference>
<reference key="1">
    <citation type="journal article" date="2001" name="Proc. Natl. Acad. Sci. U.S.A.">
        <title>Analysis of the chromosome sequence of the legume symbiont Sinorhizobium meliloti strain 1021.</title>
        <authorList>
            <person name="Capela D."/>
            <person name="Barloy-Hubler F."/>
            <person name="Gouzy J."/>
            <person name="Bothe G."/>
            <person name="Ampe F."/>
            <person name="Batut J."/>
            <person name="Boistard P."/>
            <person name="Becker A."/>
            <person name="Boutry M."/>
            <person name="Cadieu E."/>
            <person name="Dreano S."/>
            <person name="Gloux S."/>
            <person name="Godrie T."/>
            <person name="Goffeau A."/>
            <person name="Kahn D."/>
            <person name="Kiss E."/>
            <person name="Lelaure V."/>
            <person name="Masuy D."/>
            <person name="Pohl T."/>
            <person name="Portetelle D."/>
            <person name="Puehler A."/>
            <person name="Purnelle B."/>
            <person name="Ramsperger U."/>
            <person name="Renard C."/>
            <person name="Thebault P."/>
            <person name="Vandenbol M."/>
            <person name="Weidner S."/>
            <person name="Galibert F."/>
        </authorList>
    </citation>
    <scope>NUCLEOTIDE SEQUENCE [LARGE SCALE GENOMIC DNA]</scope>
    <source>
        <strain>1021</strain>
    </source>
</reference>
<reference key="2">
    <citation type="journal article" date="2001" name="Science">
        <title>The composite genome of the legume symbiont Sinorhizobium meliloti.</title>
        <authorList>
            <person name="Galibert F."/>
            <person name="Finan T.M."/>
            <person name="Long S.R."/>
            <person name="Puehler A."/>
            <person name="Abola P."/>
            <person name="Ampe F."/>
            <person name="Barloy-Hubler F."/>
            <person name="Barnett M.J."/>
            <person name="Becker A."/>
            <person name="Boistard P."/>
            <person name="Bothe G."/>
            <person name="Boutry M."/>
            <person name="Bowser L."/>
            <person name="Buhrmester J."/>
            <person name="Cadieu E."/>
            <person name="Capela D."/>
            <person name="Chain P."/>
            <person name="Cowie A."/>
            <person name="Davis R.W."/>
            <person name="Dreano S."/>
            <person name="Federspiel N.A."/>
            <person name="Fisher R.F."/>
            <person name="Gloux S."/>
            <person name="Godrie T."/>
            <person name="Goffeau A."/>
            <person name="Golding B."/>
            <person name="Gouzy J."/>
            <person name="Gurjal M."/>
            <person name="Hernandez-Lucas I."/>
            <person name="Hong A."/>
            <person name="Huizar L."/>
            <person name="Hyman R.W."/>
            <person name="Jones T."/>
            <person name="Kahn D."/>
            <person name="Kahn M.L."/>
            <person name="Kalman S."/>
            <person name="Keating D.H."/>
            <person name="Kiss E."/>
            <person name="Komp C."/>
            <person name="Lelaure V."/>
            <person name="Masuy D."/>
            <person name="Palm C."/>
            <person name="Peck M.C."/>
            <person name="Pohl T.M."/>
            <person name="Portetelle D."/>
            <person name="Purnelle B."/>
            <person name="Ramsperger U."/>
            <person name="Surzycki R."/>
            <person name="Thebault P."/>
            <person name="Vandenbol M."/>
            <person name="Vorhoelter F.J."/>
            <person name="Weidner S."/>
            <person name="Wells D.H."/>
            <person name="Wong K."/>
            <person name="Yeh K.-C."/>
            <person name="Batut J."/>
        </authorList>
    </citation>
    <scope>NUCLEOTIDE SEQUENCE [LARGE SCALE GENOMIC DNA]</scope>
    <source>
        <strain>1021</strain>
    </source>
</reference>